<dbReference type="EMBL" id="CP001068">
    <property type="protein sequence ID" value="ACD28197.1"/>
    <property type="molecule type" value="Genomic_DNA"/>
</dbReference>
<dbReference type="SMR" id="B2UCW2"/>
<dbReference type="STRING" id="402626.Rpic_3074"/>
<dbReference type="KEGG" id="rpi:Rpic_3074"/>
<dbReference type="eggNOG" id="COG4582">
    <property type="taxonomic scope" value="Bacteria"/>
</dbReference>
<dbReference type="HOGENOM" id="CLU_076303_0_1_4"/>
<dbReference type="GO" id="GO:0032153">
    <property type="term" value="C:cell division site"/>
    <property type="evidence" value="ECO:0007669"/>
    <property type="project" value="TreeGrafter"/>
</dbReference>
<dbReference type="GO" id="GO:0005737">
    <property type="term" value="C:cytoplasm"/>
    <property type="evidence" value="ECO:0007669"/>
    <property type="project" value="UniProtKB-SubCell"/>
</dbReference>
<dbReference type="GO" id="GO:0000917">
    <property type="term" value="P:division septum assembly"/>
    <property type="evidence" value="ECO:0007669"/>
    <property type="project" value="UniProtKB-KW"/>
</dbReference>
<dbReference type="GO" id="GO:0043093">
    <property type="term" value="P:FtsZ-dependent cytokinesis"/>
    <property type="evidence" value="ECO:0007669"/>
    <property type="project" value="UniProtKB-UniRule"/>
</dbReference>
<dbReference type="Gene3D" id="1.10.3900.10">
    <property type="entry name" value="YacF-like"/>
    <property type="match status" value="1"/>
</dbReference>
<dbReference type="Gene3D" id="2.60.440.10">
    <property type="entry name" value="YacF-like domains"/>
    <property type="match status" value="1"/>
</dbReference>
<dbReference type="HAMAP" id="MF_01092">
    <property type="entry name" value="ZapD"/>
    <property type="match status" value="1"/>
</dbReference>
<dbReference type="InterPro" id="IPR009777">
    <property type="entry name" value="ZapD"/>
</dbReference>
<dbReference type="InterPro" id="IPR027462">
    <property type="entry name" value="ZapD_C"/>
</dbReference>
<dbReference type="InterPro" id="IPR036268">
    <property type="entry name" value="ZapD_sf"/>
</dbReference>
<dbReference type="NCBIfam" id="NF003656">
    <property type="entry name" value="PRK05287.1-4"/>
    <property type="match status" value="1"/>
</dbReference>
<dbReference type="PANTHER" id="PTHR39455">
    <property type="entry name" value="CELL DIVISION PROTEIN ZAPD"/>
    <property type="match status" value="1"/>
</dbReference>
<dbReference type="PANTHER" id="PTHR39455:SF1">
    <property type="entry name" value="CELL DIVISION PROTEIN ZAPD"/>
    <property type="match status" value="1"/>
</dbReference>
<dbReference type="Pfam" id="PF07072">
    <property type="entry name" value="ZapD"/>
    <property type="match status" value="1"/>
</dbReference>
<dbReference type="SUPFAM" id="SSF160950">
    <property type="entry name" value="YacF-like"/>
    <property type="match status" value="1"/>
</dbReference>
<keyword id="KW-0131">Cell cycle</keyword>
<keyword id="KW-0132">Cell division</keyword>
<keyword id="KW-0963">Cytoplasm</keyword>
<keyword id="KW-0717">Septation</keyword>
<proteinExistence type="inferred from homology"/>
<sequence>MILYEYPFNERIRTLLRLEDLFERLDFFLVQEHPLQHHVALTTLFEVVDVAGRADLKSDLLKELDRQRQTLTALRANPQIDQDALDAVISELETASGNLTATHGKAGQLIADNEWLTSIRSRAIIPGGTCEFDLPAYFAWQHHPAERRRADIIKWAQPLVPLRDATMIVLRLLRESGQSGKVIANAGSYQQMLSGRVYQLMQVRLDESALGFIPEISANKYMLWVRFTQQDGDLRPKPVDADIPFQLKLCNF</sequence>
<evidence type="ECO:0000255" key="1">
    <source>
        <dbReference type="HAMAP-Rule" id="MF_01092"/>
    </source>
</evidence>
<name>ZAPD_RALPJ</name>
<accession>B2UCW2</accession>
<reference key="1">
    <citation type="submission" date="2008-05" db="EMBL/GenBank/DDBJ databases">
        <title>Complete sequence of chromosome 1 of Ralstonia pickettii 12J.</title>
        <authorList>
            <person name="Lucas S."/>
            <person name="Copeland A."/>
            <person name="Lapidus A."/>
            <person name="Glavina del Rio T."/>
            <person name="Dalin E."/>
            <person name="Tice H."/>
            <person name="Bruce D."/>
            <person name="Goodwin L."/>
            <person name="Pitluck S."/>
            <person name="Meincke L."/>
            <person name="Brettin T."/>
            <person name="Detter J.C."/>
            <person name="Han C."/>
            <person name="Kuske C.R."/>
            <person name="Schmutz J."/>
            <person name="Larimer F."/>
            <person name="Land M."/>
            <person name="Hauser L."/>
            <person name="Kyrpides N."/>
            <person name="Mikhailova N."/>
            <person name="Marsh T."/>
            <person name="Richardson P."/>
        </authorList>
    </citation>
    <scope>NUCLEOTIDE SEQUENCE [LARGE SCALE GENOMIC DNA]</scope>
    <source>
        <strain>12J</strain>
    </source>
</reference>
<comment type="function">
    <text evidence="1">Cell division factor that enhances FtsZ-ring assembly. Directly interacts with FtsZ and promotes bundling of FtsZ protofilaments, with a reduction in FtsZ GTPase activity.</text>
</comment>
<comment type="subunit">
    <text evidence="1">Interacts with FtsZ.</text>
</comment>
<comment type="subcellular location">
    <subcellularLocation>
        <location evidence="1">Cytoplasm</location>
    </subcellularLocation>
    <text evidence="1">Localizes to mid-cell in an FtsZ-dependent manner.</text>
</comment>
<comment type="similarity">
    <text evidence="1">Belongs to the ZapD family.</text>
</comment>
<organism>
    <name type="scientific">Ralstonia pickettii (strain 12J)</name>
    <dbReference type="NCBI Taxonomy" id="402626"/>
    <lineage>
        <taxon>Bacteria</taxon>
        <taxon>Pseudomonadati</taxon>
        <taxon>Pseudomonadota</taxon>
        <taxon>Betaproteobacteria</taxon>
        <taxon>Burkholderiales</taxon>
        <taxon>Burkholderiaceae</taxon>
        <taxon>Ralstonia</taxon>
    </lineage>
</organism>
<protein>
    <recommendedName>
        <fullName evidence="1">Cell division protein ZapD</fullName>
    </recommendedName>
    <alternativeName>
        <fullName evidence="1">Z ring-associated protein D</fullName>
    </alternativeName>
</protein>
<feature type="chain" id="PRO_1000136947" description="Cell division protein ZapD">
    <location>
        <begin position="1"/>
        <end position="252"/>
    </location>
</feature>
<gene>
    <name evidence="1" type="primary">zapD</name>
    <name type="ordered locus">Rpic_3074</name>
</gene>